<dbReference type="EC" id="3.2.1.23"/>
<dbReference type="EMBL" id="BA000004">
    <property type="protein sequence ID" value="BAB06442.1"/>
    <property type="molecule type" value="Genomic_DNA"/>
</dbReference>
<dbReference type="PIR" id="C83990">
    <property type="entry name" value="C83990"/>
</dbReference>
<dbReference type="RefSeq" id="WP_010898871.1">
    <property type="nucleotide sequence ID" value="NC_002570.2"/>
</dbReference>
<dbReference type="SMR" id="Q9K9C6"/>
<dbReference type="STRING" id="272558.gene:10728621"/>
<dbReference type="CAZy" id="GH2">
    <property type="family name" value="Glycoside Hydrolase Family 2"/>
</dbReference>
<dbReference type="KEGG" id="bha:BH2723"/>
<dbReference type="eggNOG" id="COG3250">
    <property type="taxonomic scope" value="Bacteria"/>
</dbReference>
<dbReference type="HOGENOM" id="CLU_002346_0_2_9"/>
<dbReference type="OrthoDB" id="9762066at2"/>
<dbReference type="Proteomes" id="UP000001258">
    <property type="component" value="Chromosome"/>
</dbReference>
<dbReference type="GO" id="GO:0009341">
    <property type="term" value="C:beta-galactosidase complex"/>
    <property type="evidence" value="ECO:0007669"/>
    <property type="project" value="InterPro"/>
</dbReference>
<dbReference type="GO" id="GO:0004565">
    <property type="term" value="F:beta-galactosidase activity"/>
    <property type="evidence" value="ECO:0007669"/>
    <property type="project" value="UniProtKB-EC"/>
</dbReference>
<dbReference type="GO" id="GO:0030246">
    <property type="term" value="F:carbohydrate binding"/>
    <property type="evidence" value="ECO:0007669"/>
    <property type="project" value="InterPro"/>
</dbReference>
<dbReference type="GO" id="GO:0005990">
    <property type="term" value="P:lactose catabolic process"/>
    <property type="evidence" value="ECO:0007669"/>
    <property type="project" value="TreeGrafter"/>
</dbReference>
<dbReference type="Gene3D" id="2.70.98.10">
    <property type="match status" value="1"/>
</dbReference>
<dbReference type="Gene3D" id="2.60.120.260">
    <property type="entry name" value="Galactose-binding domain-like"/>
    <property type="match status" value="1"/>
</dbReference>
<dbReference type="Gene3D" id="3.20.20.80">
    <property type="entry name" value="Glycosidases"/>
    <property type="match status" value="1"/>
</dbReference>
<dbReference type="Gene3D" id="2.60.40.10">
    <property type="entry name" value="Immunoglobulins"/>
    <property type="match status" value="2"/>
</dbReference>
<dbReference type="InterPro" id="IPR004199">
    <property type="entry name" value="B-gal_small/dom_5"/>
</dbReference>
<dbReference type="InterPro" id="IPR050347">
    <property type="entry name" value="Bact_Beta-galactosidase"/>
</dbReference>
<dbReference type="InterPro" id="IPR036156">
    <property type="entry name" value="Beta-gal/glucu_dom_sf"/>
</dbReference>
<dbReference type="InterPro" id="IPR011013">
    <property type="entry name" value="Gal_mutarotase_sf_dom"/>
</dbReference>
<dbReference type="InterPro" id="IPR008979">
    <property type="entry name" value="Galactose-bd-like_sf"/>
</dbReference>
<dbReference type="InterPro" id="IPR014718">
    <property type="entry name" value="GH-type_carb-bd"/>
</dbReference>
<dbReference type="InterPro" id="IPR006101">
    <property type="entry name" value="Glyco_hydro_2"/>
</dbReference>
<dbReference type="InterPro" id="IPR023232">
    <property type="entry name" value="Glyco_hydro_2_AS"/>
</dbReference>
<dbReference type="InterPro" id="IPR006103">
    <property type="entry name" value="Glyco_hydro_2_cat"/>
</dbReference>
<dbReference type="InterPro" id="IPR023230">
    <property type="entry name" value="Glyco_hydro_2_CS"/>
</dbReference>
<dbReference type="InterPro" id="IPR006102">
    <property type="entry name" value="Glyco_hydro_2_Ig-like"/>
</dbReference>
<dbReference type="InterPro" id="IPR006104">
    <property type="entry name" value="Glyco_hydro_2_N"/>
</dbReference>
<dbReference type="InterPro" id="IPR017853">
    <property type="entry name" value="Glycoside_hydrolase_SF"/>
</dbReference>
<dbReference type="InterPro" id="IPR013783">
    <property type="entry name" value="Ig-like_fold"/>
</dbReference>
<dbReference type="InterPro" id="IPR032312">
    <property type="entry name" value="LacZ_4"/>
</dbReference>
<dbReference type="PANTHER" id="PTHR46323">
    <property type="entry name" value="BETA-GALACTOSIDASE"/>
    <property type="match status" value="1"/>
</dbReference>
<dbReference type="PANTHER" id="PTHR46323:SF2">
    <property type="entry name" value="BETA-GALACTOSIDASE"/>
    <property type="match status" value="1"/>
</dbReference>
<dbReference type="Pfam" id="PF02929">
    <property type="entry name" value="Bgal_small_N"/>
    <property type="match status" value="1"/>
</dbReference>
<dbReference type="Pfam" id="PF00703">
    <property type="entry name" value="Glyco_hydro_2"/>
    <property type="match status" value="1"/>
</dbReference>
<dbReference type="Pfam" id="PF02836">
    <property type="entry name" value="Glyco_hydro_2_C"/>
    <property type="match status" value="1"/>
</dbReference>
<dbReference type="Pfam" id="PF02837">
    <property type="entry name" value="Glyco_hydro_2_N"/>
    <property type="match status" value="1"/>
</dbReference>
<dbReference type="Pfam" id="PF16353">
    <property type="entry name" value="LacZ_4"/>
    <property type="match status" value="1"/>
</dbReference>
<dbReference type="PRINTS" id="PR00132">
    <property type="entry name" value="GLHYDRLASE2"/>
</dbReference>
<dbReference type="SMART" id="SM01038">
    <property type="entry name" value="Bgal_small_N"/>
    <property type="match status" value="1"/>
</dbReference>
<dbReference type="SUPFAM" id="SSF51445">
    <property type="entry name" value="(Trans)glycosidases"/>
    <property type="match status" value="1"/>
</dbReference>
<dbReference type="SUPFAM" id="SSF49303">
    <property type="entry name" value="beta-Galactosidase/glucuronidase domain"/>
    <property type="match status" value="2"/>
</dbReference>
<dbReference type="SUPFAM" id="SSF74650">
    <property type="entry name" value="Galactose mutarotase-like"/>
    <property type="match status" value="1"/>
</dbReference>
<dbReference type="SUPFAM" id="SSF49785">
    <property type="entry name" value="Galactose-binding domain-like"/>
    <property type="match status" value="1"/>
</dbReference>
<dbReference type="PROSITE" id="PS00719">
    <property type="entry name" value="GLYCOSYL_HYDROL_F2_1"/>
    <property type="match status" value="1"/>
</dbReference>
<dbReference type="PROSITE" id="PS00608">
    <property type="entry name" value="GLYCOSYL_HYDROL_F2_2"/>
    <property type="match status" value="1"/>
</dbReference>
<name>BGAL_HALH5</name>
<sequence>MKTHSNVSWLRDVNVFAVNRLPAHSDHVYYETVEEAKKEPPMSMRHSLNGHWKFHYAINPNTRPKEFYQLGFDCKCWDDILVPGHIQLQGYGKPQYVNTMYPWDGHHHLRPPEIPEDDNPVGSYVKYFDIPNNMSNHPLFISFQGVETAFYVWLNGEFVGYSEDSFTPAEFDLTPYAVEGENKLCVEVYQRSTGSWLEDQDFWRFSGIFRDVYLYTIPNIHVYDMHVRADLDRSLQTGILETTLELKRSQEKEVMIVAELYDAEGAVVATADMKTNQDQATVSMSVDSPALWSAEDPYLYKLFLKLFDENGTLVEVVPQKIGFRRFELVNNIMTLNGKRIVFKGVNRHEFNGRTGRVVTKEDMLEDIKTMKKHNINAVRTSHYPNNSEWYQLCDEYGLYVIDEMNLETHGSWQKLGKVEPSWNIPGNHLEWEPIVMDRAVSMFERDKNHPSILIWSCGNESYAGEVILNVSRYFKSVDPSRLVHYEGVFHARAYDATSDMESRMYAKPKDIEDYLTNDPKKPYISCEYMHAMGNSLGGMHKYTELEQKYPMYQGGFIWDYIDQALLKKDRYGKEYFAYGGDFGDRPTDYSFCANGIVYADRKPSPKMQEVKFLYQNIKLVPDREGVLVKNENLFTDTSAYQLEYVLYWEGTELYRKKQDVFVAPQEEVYLPFDWLEQGMNESGEYCIHTMLTLKQDQLWAEKGHEVAFGQHVYRMGAIQKERNARGALKVVHGDVNIGIHGEDFSVLFSKAVGSLVSLHYAGKEMIEQPPMPLFWRATTDNDKGCSQLYHSGIWYAASLARKCVNMEVEEKPGHVSVLFTYHFAISDRVEVKVGYTVFPDGSLRVRSTYQASKGGETLPQLPMFALSFKLPADYEQLEWYALGPEENYADRATGARLCTFKNKVEDSLSQYVTPQESGNRTGVRTVKILDANGQGIEVCSVEEPIECQISPYTAFELEQASHPYELPNVHYTVVNVAGKQMGVGGDDSWGAPVHDEYVLKADQDLEFVFDINRV</sequence>
<keyword id="KW-0326">Glycosidase</keyword>
<keyword id="KW-0378">Hydrolase</keyword>
<keyword id="KW-1185">Reference proteome</keyword>
<feature type="chain" id="PRO_0000057658" description="Beta-galactosidase">
    <location>
        <begin position="1"/>
        <end position="1014"/>
    </location>
</feature>
<feature type="active site" description="Proton donor" evidence="1">
    <location>
        <position position="460"/>
    </location>
</feature>
<feature type="active site" description="Nucleophile" evidence="1">
    <location>
        <position position="527"/>
    </location>
</feature>
<protein>
    <recommendedName>
        <fullName>Beta-galactosidase</fullName>
        <shortName>Beta-gal</shortName>
        <ecNumber>3.2.1.23</ecNumber>
    </recommendedName>
    <alternativeName>
        <fullName>Lactase</fullName>
    </alternativeName>
</protein>
<evidence type="ECO:0000250" key="1"/>
<evidence type="ECO:0000305" key="2"/>
<organism>
    <name type="scientific">Halalkalibacterium halodurans (strain ATCC BAA-125 / DSM 18197 / FERM 7344 / JCM 9153 / C-125)</name>
    <name type="common">Bacillus halodurans</name>
    <dbReference type="NCBI Taxonomy" id="272558"/>
    <lineage>
        <taxon>Bacteria</taxon>
        <taxon>Bacillati</taxon>
        <taxon>Bacillota</taxon>
        <taxon>Bacilli</taxon>
        <taxon>Bacillales</taxon>
        <taxon>Bacillaceae</taxon>
        <taxon>Halalkalibacterium (ex Joshi et al. 2022)</taxon>
    </lineage>
</organism>
<proteinExistence type="inferred from homology"/>
<accession>Q9K9C6</accession>
<comment type="catalytic activity">
    <reaction>
        <text>Hydrolysis of terminal non-reducing beta-D-galactose residues in beta-D-galactosides.</text>
        <dbReference type="EC" id="3.2.1.23"/>
    </reaction>
</comment>
<comment type="similarity">
    <text evidence="2">Belongs to the glycosyl hydrolase 2 family.</text>
</comment>
<reference key="1">
    <citation type="journal article" date="2000" name="Nucleic Acids Res.">
        <title>Complete genome sequence of the alkaliphilic bacterium Bacillus halodurans and genomic sequence comparison with Bacillus subtilis.</title>
        <authorList>
            <person name="Takami H."/>
            <person name="Nakasone K."/>
            <person name="Takaki Y."/>
            <person name="Maeno G."/>
            <person name="Sasaki R."/>
            <person name="Masui N."/>
            <person name="Fuji F."/>
            <person name="Hirama C."/>
            <person name="Nakamura Y."/>
            <person name="Ogasawara N."/>
            <person name="Kuhara S."/>
            <person name="Horikoshi K."/>
        </authorList>
    </citation>
    <scope>NUCLEOTIDE SEQUENCE [LARGE SCALE GENOMIC DNA]</scope>
    <source>
        <strain>ATCC BAA-125 / DSM 18197 / FERM 7344 / JCM 9153 / C-125</strain>
    </source>
</reference>
<gene>
    <name type="primary">lacZ</name>
    <name type="ordered locus">BH2723</name>
</gene>